<organism>
    <name type="scientific">Gallus gallus</name>
    <name type="common">Chicken</name>
    <dbReference type="NCBI Taxonomy" id="9031"/>
    <lineage>
        <taxon>Eukaryota</taxon>
        <taxon>Metazoa</taxon>
        <taxon>Chordata</taxon>
        <taxon>Craniata</taxon>
        <taxon>Vertebrata</taxon>
        <taxon>Euteleostomi</taxon>
        <taxon>Archelosauria</taxon>
        <taxon>Archosauria</taxon>
        <taxon>Dinosauria</taxon>
        <taxon>Saurischia</taxon>
        <taxon>Theropoda</taxon>
        <taxon>Coelurosauria</taxon>
        <taxon>Aves</taxon>
        <taxon>Neognathae</taxon>
        <taxon>Galloanserae</taxon>
        <taxon>Galliformes</taxon>
        <taxon>Phasianidae</taxon>
        <taxon>Phasianinae</taxon>
        <taxon>Gallus</taxon>
    </lineage>
</organism>
<comment type="function">
    <text>Appears to perform a very early function in establishing the identity of a subset of cells that originate in the region of the ventricular zone in the developing spinal cord and in the hindbrain.</text>
</comment>
<comment type="subcellular location">
    <subcellularLocation>
        <location evidence="1">Nucleus</location>
    </subcellularLocation>
</comment>
<comment type="tissue specificity">
    <text>Localized to the central nervous system during embryogenesis. It is found restricted to the rostro-caudal and dorso-ventral regions of the hindbrain. In the ventricular zone of the spinal cord, it localizes to the dorsal part of the basal plate. In the adult, it is detected in ovary.</text>
</comment>
<comment type="developmental stage">
    <text>First detected between days 2.5 and 3 of incubation (stages 14-15 and 18-17) until day 10 (stage 36). Maximal levels are observed at stages when the spinal cord has maximal mitotic activity. It becomes undetectable when the ventricular zone ceases to exist.</text>
</comment>
<comment type="similarity">
    <text evidence="3">Belongs to the H2.0 homeobox family.</text>
</comment>
<dbReference type="EMBL" id="X59548">
    <property type="protein sequence ID" value="CAA42122.1"/>
    <property type="molecule type" value="Genomic_DNA"/>
</dbReference>
<dbReference type="EMBL" id="X59549">
    <property type="protein sequence ID" value="CAA42122.1"/>
    <property type="status" value="JOINED"/>
    <property type="molecule type" value="Genomic_DNA"/>
</dbReference>
<dbReference type="PIR" id="A56566">
    <property type="entry name" value="A56566"/>
</dbReference>
<dbReference type="SMR" id="Q91975"/>
<dbReference type="FunCoup" id="Q91975">
    <property type="interactions" value="126"/>
</dbReference>
<dbReference type="STRING" id="9031.ENSGALP00000037987"/>
<dbReference type="PaxDb" id="9031-ENSGALP00000037987"/>
<dbReference type="VEuPathDB" id="HostDB:geneid_417801"/>
<dbReference type="eggNOG" id="KOG0488">
    <property type="taxonomic scope" value="Eukaryota"/>
</dbReference>
<dbReference type="InParanoid" id="Q91975"/>
<dbReference type="OrthoDB" id="6159439at2759"/>
<dbReference type="PhylomeDB" id="Q91975"/>
<dbReference type="Proteomes" id="UP000000539">
    <property type="component" value="Unassembled WGS sequence"/>
</dbReference>
<dbReference type="GO" id="GO:0005634">
    <property type="term" value="C:nucleus"/>
    <property type="evidence" value="ECO:0007669"/>
    <property type="project" value="UniProtKB-SubCell"/>
</dbReference>
<dbReference type="GO" id="GO:0003677">
    <property type="term" value="F:DNA binding"/>
    <property type="evidence" value="ECO:0007669"/>
    <property type="project" value="UniProtKB-KW"/>
</dbReference>
<dbReference type="GO" id="GO:0000981">
    <property type="term" value="F:DNA-binding transcription factor activity, RNA polymerase II-specific"/>
    <property type="evidence" value="ECO:0007669"/>
    <property type="project" value="InterPro"/>
</dbReference>
<dbReference type="GO" id="GO:0006357">
    <property type="term" value="P:regulation of transcription by RNA polymerase II"/>
    <property type="evidence" value="ECO:0000318"/>
    <property type="project" value="GO_Central"/>
</dbReference>
<dbReference type="CDD" id="cd00086">
    <property type="entry name" value="homeodomain"/>
    <property type="match status" value="1"/>
</dbReference>
<dbReference type="FunFam" id="1.10.10.60:FF:000187">
    <property type="entry name" value="homeobox protein DBX2"/>
    <property type="match status" value="1"/>
</dbReference>
<dbReference type="Gene3D" id="1.10.10.60">
    <property type="entry name" value="Homeodomain-like"/>
    <property type="match status" value="1"/>
</dbReference>
<dbReference type="InterPro" id="IPR051662">
    <property type="entry name" value="H2.0_Homeobox_NeuralPatt"/>
</dbReference>
<dbReference type="InterPro" id="IPR001356">
    <property type="entry name" value="HD"/>
</dbReference>
<dbReference type="InterPro" id="IPR020479">
    <property type="entry name" value="HD_metazoa"/>
</dbReference>
<dbReference type="InterPro" id="IPR017970">
    <property type="entry name" value="Homeobox_CS"/>
</dbReference>
<dbReference type="InterPro" id="IPR009057">
    <property type="entry name" value="Homeodomain-like_sf"/>
</dbReference>
<dbReference type="InterPro" id="IPR000047">
    <property type="entry name" value="HTH_motif"/>
</dbReference>
<dbReference type="PANTHER" id="PTHR24331">
    <property type="entry name" value="DBX"/>
    <property type="match status" value="1"/>
</dbReference>
<dbReference type="PANTHER" id="PTHR24331:SF4">
    <property type="entry name" value="HOMEOBOX PROTEIN DBX2"/>
    <property type="match status" value="1"/>
</dbReference>
<dbReference type="Pfam" id="PF00046">
    <property type="entry name" value="Homeodomain"/>
    <property type="match status" value="1"/>
</dbReference>
<dbReference type="PRINTS" id="PR00024">
    <property type="entry name" value="HOMEOBOX"/>
</dbReference>
<dbReference type="PRINTS" id="PR00031">
    <property type="entry name" value="HTHREPRESSR"/>
</dbReference>
<dbReference type="SMART" id="SM00389">
    <property type="entry name" value="HOX"/>
    <property type="match status" value="1"/>
</dbReference>
<dbReference type="SUPFAM" id="SSF46689">
    <property type="entry name" value="Homeodomain-like"/>
    <property type="match status" value="1"/>
</dbReference>
<dbReference type="PROSITE" id="PS00027">
    <property type="entry name" value="HOMEOBOX_1"/>
    <property type="match status" value="1"/>
</dbReference>
<dbReference type="PROSITE" id="PS50071">
    <property type="entry name" value="HOMEOBOX_2"/>
    <property type="match status" value="1"/>
</dbReference>
<evidence type="ECO:0000255" key="1">
    <source>
        <dbReference type="PROSITE-ProRule" id="PRU00108"/>
    </source>
</evidence>
<evidence type="ECO:0000256" key="2">
    <source>
        <dbReference type="SAM" id="MobiDB-lite"/>
    </source>
</evidence>
<evidence type="ECO:0000305" key="3"/>
<feature type="chain" id="PRO_0000049057" description="Homeobox protein DBX2">
    <location>
        <begin position="1" status="less than"/>
        <end position="157"/>
    </location>
</feature>
<feature type="DNA-binding region" description="Homeobox" evidence="1">
    <location>
        <begin position="9"/>
        <end position="68"/>
    </location>
</feature>
<feature type="region of interest" description="Disordered" evidence="2">
    <location>
        <begin position="105"/>
        <end position="157"/>
    </location>
</feature>
<feature type="compositionally biased region" description="Polar residues" evidence="2">
    <location>
        <begin position="118"/>
        <end position="139"/>
    </location>
</feature>
<feature type="non-terminal residue">
    <location>
        <position position="1"/>
    </location>
</feature>
<accession>Q91975</accession>
<reference key="1">
    <citation type="journal article" date="1991" name="Mech. Dev.">
        <title>CHox E, a chicken homeogene of the H2.0 type exhibits dorso-ventral restriction in the proliferating region of the spinal cord.</title>
        <authorList>
            <person name="Rangini Z."/>
            <person name="Ben-Yehuda A."/>
            <person name="Shapira E."/>
            <person name="Gruenbaum Y."/>
            <person name="Fainsod A."/>
        </authorList>
    </citation>
    <scope>NUCLEOTIDE SEQUENCE [GENOMIC DNA]</scope>
    <source>
        <tissue>Oviduct</tissue>
    </source>
</reference>
<keyword id="KW-0217">Developmental protein</keyword>
<keyword id="KW-0238">DNA-binding</keyword>
<keyword id="KW-0371">Homeobox</keyword>
<keyword id="KW-0539">Nucleus</keyword>
<keyword id="KW-1185">Reference proteome</keyword>
<sequence>ESNSKARRGILRRAVFSEDQRKALEKMFQKQKYISKTDRKKLAINLGLKESQVKIWFQNRRMKWRNSKEKEVLSNRCLQEGLQENYLSQSAMNFASPCPSVWEVSQEQTSPRWKEKSPGNSERLTSTQPPPRANSSQSPLYLYPDHDTANKAVTSSD</sequence>
<proteinExistence type="evidence at transcript level"/>
<gene>
    <name type="primary">DBX2</name>
    <name type="synonym">CHOXE</name>
</gene>
<name>DBX2_CHICK</name>
<protein>
    <recommendedName>
        <fullName>Homeobox protein DBX2</fullName>
    </recommendedName>
    <alternativeName>
        <fullName>Developing brain homeobox protein 2</fullName>
    </alternativeName>
    <alternativeName>
        <fullName>Homeobox protein CHox-E</fullName>
    </alternativeName>
</protein>